<name>CSTN2_HUMAN</name>
<accession>Q9H4D0</accession>
<accession>B2RCW5</accession>
<accession>D3DNF4</accession>
<accession>Q3SX54</accession>
<accession>Q3ZB76</accession>
<accession>Q5UE56</accession>
<accession>Q96HZ2</accession>
<accession>Q9BSS0</accession>
<sequence length="955" mass="107006">MLPGRLCWVPLLLALGVGSGSGGGGDSRQRRLLAAKVNKHKPWIETSYHGVITENNDTVILDPPLVALDKDAPVPFAGEICAFKIHGQELPFEAVVLNKTSGEGRLRAKSPIDCELQKEYTFIIQAYDCGAGPHETAWKKSHKAVVHIQVKDVNEFAPTFKEPAYKAVVTEGKIYDSILQVEAIDEDCSPQYSQICNYEIVTTDVPFAIDRNGNIRNTEKLSYDKQHQYEILVTAYDCGQKPAAQDTLVQVDVKPVCKPGWQDWTKRIEYQPGSGSMPLFPSIHLETCDGAVSSLQIVTELQTNYIGKGCDRETYSEKSLQKLCGASSGIIDLLPSPSAATNWTAGLLVDSSEMIFKFDGRQGAKVPDGIVPKNLTDQFTITMWMKHGPSPGVRAEKETILCNSDKTEMNRHHYALYVHNCRLVFLLRKDFDQADTFRPAEFHWKLDQICDKEWHYYVINVEFPVVTLYMDGATYEPYLVTNDWPIHPSHIAMQLTVGACWQGGEVTKPQFAQFFHGSLASLTIRPGKMESQKVISCLQACKEGLDINSLESLGQGIKYHFNPSQSILVMEGDDIGNINRALQKVSYINSRQFPTAGVRRLKVSSKVQCFGEDVCISIPEVDAYVMVLQAIEPRITLRGTDHFWRPAAQFESARGVTLFPDIKIVSTFAKTEAPGDVKTTDPKSEVLEEMLHNLDFCDILVIGGDLDPRQECLELNHSELHQRHLDATNSTAGYSIYGVGSMSRYEQVLHHIRYRNWRPASLEARRFRIKCSELNGRYTSNEFNLEVSILHEDQVSDKEHVNHLIVQPPFLQSVHHPESRSSIQHSSVVPSIATVVIIISVCMLVFVVAMGVYRVRIAHQHFIQETEAAKESEMDWDDSALTITVNPMEKHEGPGHGEDETEGEEEEEAEEEMSSSSGSDDSEEEEEEEGMGRGRHGQNGARQAQLEWDDSTLPY</sequence>
<protein>
    <recommendedName>
        <fullName evidence="12">Calsyntenin-2</fullName>
    </recommendedName>
    <alternativeName>
        <fullName evidence="13">Alcadein-gamma</fullName>
        <shortName evidence="13">Alc-gamma</shortName>
    </alternativeName>
</protein>
<organism>
    <name type="scientific">Homo sapiens</name>
    <name type="common">Human</name>
    <dbReference type="NCBI Taxonomy" id="9606"/>
    <lineage>
        <taxon>Eukaryota</taxon>
        <taxon>Metazoa</taxon>
        <taxon>Chordata</taxon>
        <taxon>Craniata</taxon>
        <taxon>Vertebrata</taxon>
        <taxon>Euteleostomi</taxon>
        <taxon>Mammalia</taxon>
        <taxon>Eutheria</taxon>
        <taxon>Euarchontoglires</taxon>
        <taxon>Primates</taxon>
        <taxon>Haplorrhini</taxon>
        <taxon>Catarrhini</taxon>
        <taxon>Hominidae</taxon>
        <taxon>Homo</taxon>
    </lineage>
</organism>
<dbReference type="EMBL" id="AJ278018">
    <property type="protein sequence ID" value="CAC14924.1"/>
    <property type="molecule type" value="mRNA"/>
</dbReference>
<dbReference type="EMBL" id="AY753303">
    <property type="protein sequence ID" value="AAV30553.1"/>
    <property type="molecule type" value="mRNA"/>
</dbReference>
<dbReference type="EMBL" id="AK315308">
    <property type="protein sequence ID" value="BAG37712.1"/>
    <property type="molecule type" value="mRNA"/>
</dbReference>
<dbReference type="EMBL" id="AC010181">
    <property type="status" value="NOT_ANNOTATED_CDS"/>
    <property type="molecule type" value="Genomic_DNA"/>
</dbReference>
<dbReference type="EMBL" id="AC048346">
    <property type="status" value="NOT_ANNOTATED_CDS"/>
    <property type="molecule type" value="Genomic_DNA"/>
</dbReference>
<dbReference type="EMBL" id="AC092988">
    <property type="status" value="NOT_ANNOTATED_CDS"/>
    <property type="molecule type" value="Genomic_DNA"/>
</dbReference>
<dbReference type="EMBL" id="AC108744">
    <property type="status" value="NOT_ANNOTATED_CDS"/>
    <property type="molecule type" value="Genomic_DNA"/>
</dbReference>
<dbReference type="EMBL" id="AC117390">
    <property type="status" value="NOT_ANNOTATED_CDS"/>
    <property type="molecule type" value="Genomic_DNA"/>
</dbReference>
<dbReference type="EMBL" id="AC117396">
    <property type="status" value="NOT_ANNOTATED_CDS"/>
    <property type="molecule type" value="Genomic_DNA"/>
</dbReference>
<dbReference type="EMBL" id="AC117449">
    <property type="status" value="NOT_ANNOTATED_CDS"/>
    <property type="molecule type" value="Genomic_DNA"/>
</dbReference>
<dbReference type="EMBL" id="CH471052">
    <property type="protein sequence ID" value="EAW79018.1"/>
    <property type="molecule type" value="Genomic_DNA"/>
</dbReference>
<dbReference type="EMBL" id="BC004871">
    <property type="protein sequence ID" value="AAH04871.2"/>
    <property type="molecule type" value="mRNA"/>
</dbReference>
<dbReference type="EMBL" id="BC007943">
    <property type="protein sequence ID" value="AAH07943.2"/>
    <property type="molecule type" value="mRNA"/>
</dbReference>
<dbReference type="EMBL" id="BC103496">
    <property type="protein sequence ID" value="AAI03497.1"/>
    <property type="molecule type" value="mRNA"/>
</dbReference>
<dbReference type="EMBL" id="BC103506">
    <property type="protein sequence ID" value="AAI03507.1"/>
    <property type="molecule type" value="mRNA"/>
</dbReference>
<dbReference type="EMBL" id="BC104485">
    <property type="protein sequence ID" value="AAI04486.1"/>
    <property type="molecule type" value="mRNA"/>
</dbReference>
<dbReference type="CCDS" id="CCDS3112.1"/>
<dbReference type="RefSeq" id="NP_071414.2">
    <property type="nucleotide sequence ID" value="NM_022131.3"/>
</dbReference>
<dbReference type="SMR" id="Q9H4D0"/>
<dbReference type="BioGRID" id="122049">
    <property type="interactions" value="21"/>
</dbReference>
<dbReference type="FunCoup" id="Q9H4D0">
    <property type="interactions" value="243"/>
</dbReference>
<dbReference type="IntAct" id="Q9H4D0">
    <property type="interactions" value="19"/>
</dbReference>
<dbReference type="STRING" id="9606.ENSP00000402460"/>
<dbReference type="GlyConnect" id="1061">
    <property type="glycosylation" value="3 N-Linked glycans (2 sites)"/>
</dbReference>
<dbReference type="GlyCosmos" id="Q9H4D0">
    <property type="glycosylation" value="6 sites, 2 glycans"/>
</dbReference>
<dbReference type="GlyGen" id="Q9H4D0">
    <property type="glycosylation" value="6 sites, 6 N-linked glycans (3 sites)"/>
</dbReference>
<dbReference type="iPTMnet" id="Q9H4D0"/>
<dbReference type="PhosphoSitePlus" id="Q9H4D0"/>
<dbReference type="BioMuta" id="CLSTN2"/>
<dbReference type="DMDM" id="296434469"/>
<dbReference type="jPOST" id="Q9H4D0"/>
<dbReference type="MassIVE" id="Q9H4D0"/>
<dbReference type="PaxDb" id="9606-ENSP00000402460"/>
<dbReference type="PeptideAtlas" id="Q9H4D0"/>
<dbReference type="ProteomicsDB" id="80823"/>
<dbReference type="Antibodypedia" id="33471">
    <property type="antibodies" value="129 antibodies from 20 providers"/>
</dbReference>
<dbReference type="DNASU" id="64084"/>
<dbReference type="Ensembl" id="ENST00000458420.7">
    <property type="protein sequence ID" value="ENSP00000402460.2"/>
    <property type="gene ID" value="ENSG00000158258.16"/>
</dbReference>
<dbReference type="GeneID" id="64084"/>
<dbReference type="KEGG" id="hsa:64084"/>
<dbReference type="MANE-Select" id="ENST00000458420.7">
    <property type="protein sequence ID" value="ENSP00000402460.2"/>
    <property type="RefSeq nucleotide sequence ID" value="NM_022131.3"/>
    <property type="RefSeq protein sequence ID" value="NP_071414.2"/>
</dbReference>
<dbReference type="UCSC" id="uc003etn.4">
    <property type="organism name" value="human"/>
</dbReference>
<dbReference type="AGR" id="HGNC:17448"/>
<dbReference type="CTD" id="64084"/>
<dbReference type="DisGeNET" id="64084"/>
<dbReference type="GeneCards" id="CLSTN2"/>
<dbReference type="HGNC" id="HGNC:17448">
    <property type="gene designation" value="CLSTN2"/>
</dbReference>
<dbReference type="HPA" id="ENSG00000158258">
    <property type="expression patterns" value="Tissue enhanced (brain, ovary)"/>
</dbReference>
<dbReference type="MIM" id="611323">
    <property type="type" value="gene"/>
</dbReference>
<dbReference type="neXtProt" id="NX_Q9H4D0"/>
<dbReference type="OpenTargets" id="ENSG00000158258"/>
<dbReference type="PharmGKB" id="PA38239"/>
<dbReference type="VEuPathDB" id="HostDB:ENSG00000158258"/>
<dbReference type="eggNOG" id="KOG1834">
    <property type="taxonomic scope" value="Eukaryota"/>
</dbReference>
<dbReference type="GeneTree" id="ENSGT00950000183086"/>
<dbReference type="HOGENOM" id="CLU_008904_0_0_1"/>
<dbReference type="InParanoid" id="Q9H4D0"/>
<dbReference type="OMA" id="HMVIQPQ"/>
<dbReference type="OrthoDB" id="10012272at2759"/>
<dbReference type="PAN-GO" id="Q9H4D0">
    <property type="GO annotations" value="4 GO annotations based on evolutionary models"/>
</dbReference>
<dbReference type="PhylomeDB" id="Q9H4D0"/>
<dbReference type="TreeFam" id="TF315946"/>
<dbReference type="PathwayCommons" id="Q9H4D0"/>
<dbReference type="BioGRID-ORCS" id="64084">
    <property type="hits" value="9 hits in 1149 CRISPR screens"/>
</dbReference>
<dbReference type="ChiTaRS" id="CLSTN2">
    <property type="organism name" value="human"/>
</dbReference>
<dbReference type="GenomeRNAi" id="64084"/>
<dbReference type="Pharos" id="Q9H4D0">
    <property type="development level" value="Tbio"/>
</dbReference>
<dbReference type="PRO" id="PR:Q9H4D0"/>
<dbReference type="Proteomes" id="UP000005640">
    <property type="component" value="Chromosome 3"/>
</dbReference>
<dbReference type="RNAct" id="Q9H4D0">
    <property type="molecule type" value="protein"/>
</dbReference>
<dbReference type="Bgee" id="ENSG00000158258">
    <property type="expression patterns" value="Expressed in endothelial cell and 152 other cell types or tissues"/>
</dbReference>
<dbReference type="GO" id="GO:0009986">
    <property type="term" value="C:cell surface"/>
    <property type="evidence" value="ECO:0000318"/>
    <property type="project" value="GO_Central"/>
</dbReference>
<dbReference type="GO" id="GO:0030425">
    <property type="term" value="C:dendrite"/>
    <property type="evidence" value="ECO:0007669"/>
    <property type="project" value="UniProtKB-SubCell"/>
</dbReference>
<dbReference type="GO" id="GO:0005789">
    <property type="term" value="C:endoplasmic reticulum membrane"/>
    <property type="evidence" value="ECO:0007669"/>
    <property type="project" value="UniProtKB-SubCell"/>
</dbReference>
<dbReference type="GO" id="GO:0098978">
    <property type="term" value="C:glutamatergic synapse"/>
    <property type="evidence" value="ECO:0007669"/>
    <property type="project" value="Ensembl"/>
</dbReference>
<dbReference type="GO" id="GO:0000139">
    <property type="term" value="C:Golgi membrane"/>
    <property type="evidence" value="ECO:0007669"/>
    <property type="project" value="UniProtKB-SubCell"/>
</dbReference>
<dbReference type="GO" id="GO:0098839">
    <property type="term" value="C:postsynaptic density membrane"/>
    <property type="evidence" value="ECO:0007669"/>
    <property type="project" value="Ensembl"/>
</dbReference>
<dbReference type="GO" id="GO:0045211">
    <property type="term" value="C:postsynaptic membrane"/>
    <property type="evidence" value="ECO:0000318"/>
    <property type="project" value="GO_Central"/>
</dbReference>
<dbReference type="GO" id="GO:0005509">
    <property type="term" value="F:calcium ion binding"/>
    <property type="evidence" value="ECO:0007669"/>
    <property type="project" value="InterPro"/>
</dbReference>
<dbReference type="GO" id="GO:0008306">
    <property type="term" value="P:associative learning"/>
    <property type="evidence" value="ECO:0007669"/>
    <property type="project" value="Ensembl"/>
</dbReference>
<dbReference type="GO" id="GO:0007156">
    <property type="term" value="P:homophilic cell adhesion via plasma membrane adhesion molecules"/>
    <property type="evidence" value="ECO:0007669"/>
    <property type="project" value="InterPro"/>
</dbReference>
<dbReference type="GO" id="GO:1904862">
    <property type="term" value="P:inhibitory synapse assembly"/>
    <property type="evidence" value="ECO:0007669"/>
    <property type="project" value="Ensembl"/>
</dbReference>
<dbReference type="GO" id="GO:0051965">
    <property type="term" value="P:positive regulation of synapse assembly"/>
    <property type="evidence" value="ECO:0000318"/>
    <property type="project" value="GO_Central"/>
</dbReference>
<dbReference type="GO" id="GO:0050806">
    <property type="term" value="P:positive regulation of synaptic transmission"/>
    <property type="evidence" value="ECO:0000318"/>
    <property type="project" value="GO_Central"/>
</dbReference>
<dbReference type="CDD" id="cd11304">
    <property type="entry name" value="Cadherin_repeat"/>
    <property type="match status" value="2"/>
</dbReference>
<dbReference type="FunFam" id="2.60.40.60:FF:000025">
    <property type="entry name" value="Calsyntenin 1"/>
    <property type="match status" value="1"/>
</dbReference>
<dbReference type="FunFam" id="2.60.120.200:FF:000029">
    <property type="entry name" value="Calsyntenin 2"/>
    <property type="match status" value="1"/>
</dbReference>
<dbReference type="FunFam" id="2.60.40.60:FF:000062">
    <property type="entry name" value="Calsyntenin 3"/>
    <property type="match status" value="1"/>
</dbReference>
<dbReference type="Gene3D" id="2.60.120.200">
    <property type="match status" value="1"/>
</dbReference>
<dbReference type="Gene3D" id="2.60.40.60">
    <property type="entry name" value="Cadherins"/>
    <property type="match status" value="2"/>
</dbReference>
<dbReference type="InterPro" id="IPR002126">
    <property type="entry name" value="Cadherin-like_dom"/>
</dbReference>
<dbReference type="InterPro" id="IPR015919">
    <property type="entry name" value="Cadherin-like_sf"/>
</dbReference>
<dbReference type="InterPro" id="IPR045588">
    <property type="entry name" value="CLSTN_C"/>
</dbReference>
<dbReference type="InterPro" id="IPR013320">
    <property type="entry name" value="ConA-like_dom_sf"/>
</dbReference>
<dbReference type="PANTHER" id="PTHR14139">
    <property type="entry name" value="CALSYNTENIN"/>
    <property type="match status" value="1"/>
</dbReference>
<dbReference type="PANTHER" id="PTHR14139:SF3">
    <property type="entry name" value="CALSYNTENIN-2"/>
    <property type="match status" value="1"/>
</dbReference>
<dbReference type="Pfam" id="PF00028">
    <property type="entry name" value="Cadherin"/>
    <property type="match status" value="1"/>
</dbReference>
<dbReference type="Pfam" id="PF19699">
    <property type="entry name" value="CLSTN_C"/>
    <property type="match status" value="1"/>
</dbReference>
<dbReference type="PRINTS" id="PR00205">
    <property type="entry name" value="CADHERIN"/>
</dbReference>
<dbReference type="SMART" id="SM00112">
    <property type="entry name" value="CA"/>
    <property type="match status" value="2"/>
</dbReference>
<dbReference type="SUPFAM" id="SSF49313">
    <property type="entry name" value="Cadherin-like"/>
    <property type="match status" value="2"/>
</dbReference>
<dbReference type="SUPFAM" id="SSF49899">
    <property type="entry name" value="Concanavalin A-like lectins/glucanases"/>
    <property type="match status" value="1"/>
</dbReference>
<dbReference type="PROSITE" id="PS50268">
    <property type="entry name" value="CADHERIN_2"/>
    <property type="match status" value="2"/>
</dbReference>
<proteinExistence type="evidence at protein level"/>
<gene>
    <name evidence="15" type="primary">CLSTN2</name>
    <name type="synonym">CS2</name>
</gene>
<keyword id="KW-0106">Calcium</keyword>
<keyword id="KW-0130">Cell adhesion</keyword>
<keyword id="KW-1003">Cell membrane</keyword>
<keyword id="KW-0966">Cell projection</keyword>
<keyword id="KW-0256">Endoplasmic reticulum</keyword>
<keyword id="KW-0325">Glycoprotein</keyword>
<keyword id="KW-0333">Golgi apparatus</keyword>
<keyword id="KW-0472">Membrane</keyword>
<keyword id="KW-0628">Postsynaptic cell membrane</keyword>
<keyword id="KW-1267">Proteomics identification</keyword>
<keyword id="KW-1185">Reference proteome</keyword>
<keyword id="KW-0677">Repeat</keyword>
<keyword id="KW-0732">Signal</keyword>
<keyword id="KW-0770">Synapse</keyword>
<keyword id="KW-0812">Transmembrane</keyword>
<keyword id="KW-1133">Transmembrane helix</keyword>
<feature type="signal peptide" evidence="4">
    <location>
        <begin position="1"/>
        <end position="20"/>
    </location>
</feature>
<feature type="chain" id="PRO_0000004023" description="Calsyntenin-2">
    <location>
        <begin position="21"/>
        <end position="955"/>
    </location>
</feature>
<feature type="topological domain" description="Extracellular" evidence="4">
    <location>
        <begin position="21"/>
        <end position="831"/>
    </location>
</feature>
<feature type="transmembrane region" description="Helical" evidence="4">
    <location>
        <begin position="832"/>
        <end position="852"/>
    </location>
</feature>
<feature type="topological domain" description="Cytoplasmic" evidence="4">
    <location>
        <begin position="853"/>
        <end position="955"/>
    </location>
</feature>
<feature type="domain" description="Cadherin 1" evidence="5">
    <location>
        <begin position="44"/>
        <end position="160"/>
    </location>
</feature>
<feature type="domain" description="Cadherin 2" evidence="5">
    <location>
        <begin position="161"/>
        <end position="280"/>
    </location>
</feature>
<feature type="region of interest" description="Disordered" evidence="6">
    <location>
        <begin position="887"/>
        <end position="955"/>
    </location>
</feature>
<feature type="compositionally biased region" description="Basic and acidic residues" evidence="6">
    <location>
        <begin position="888"/>
        <end position="898"/>
    </location>
</feature>
<feature type="compositionally biased region" description="Acidic residues" evidence="6">
    <location>
        <begin position="899"/>
        <end position="913"/>
    </location>
</feature>
<feature type="compositionally biased region" description="Acidic residues" evidence="6">
    <location>
        <begin position="920"/>
        <end position="929"/>
    </location>
</feature>
<feature type="glycosylation site" description="N-linked (GlcNAc...) asparagine" evidence="4">
    <location>
        <position position="56"/>
    </location>
</feature>
<feature type="glycosylation site" description="N-linked (GlcNAc...) asparagine" evidence="4">
    <location>
        <position position="98"/>
    </location>
</feature>
<feature type="glycosylation site" description="N-linked (GlcNAc...) asparagine" evidence="4">
    <location>
        <position position="342"/>
    </location>
</feature>
<feature type="glycosylation site" description="N-linked (GlcNAc...) asparagine" evidence="4">
    <location>
        <position position="374"/>
    </location>
</feature>
<feature type="glycosylation site" description="N-linked (GlcNAc...) asparagine" evidence="4">
    <location>
        <position position="716"/>
    </location>
</feature>
<feature type="glycosylation site" description="N-linked (GlcNAc...) asparagine" evidence="4">
    <location>
        <position position="729"/>
    </location>
</feature>
<feature type="sequence variant" id="VAR_036112" description="In a colorectal cancer sample; somatic mutation." evidence="10">
    <original>S</original>
    <variation>I</variation>
    <location>
        <position position="193"/>
    </location>
</feature>
<feature type="sequence variant" id="VAR_055615" description="In dbSNP:rs17348572.">
    <original>I</original>
    <variation>T</variation>
    <location>
        <position position="331"/>
    </location>
</feature>
<feature type="sequence variant" id="VAR_039557" description="In dbSNP:rs7632885." evidence="7 8 11">
    <original>V</original>
    <variation>I</variation>
    <location>
        <position position="366"/>
    </location>
</feature>
<feature type="sequence variant" id="VAR_036113" description="In a colorectal cancer sample; somatic mutation; dbSNP:rs766718816." evidence="10">
    <original>R</original>
    <variation>Q</variation>
    <location>
        <position position="765"/>
    </location>
</feature>
<feature type="sequence conflict" description="In Ref. 6; AAI03507." evidence="14" ref="6">
    <original>V</original>
    <variation>D</variation>
    <location>
        <position position="847"/>
    </location>
</feature>
<feature type="sequence conflict" description="In Ref. 6; AAI03507." evidence="14" ref="6">
    <original>L</original>
    <variation>P</variation>
    <location>
        <position position="946"/>
    </location>
</feature>
<reference key="1">
    <citation type="journal article" date="2002" name="Mol. Cell. Neurosci.">
        <title>The calsyntenins - a family of postsynaptic membrane proteins with distinct neuronal expression patterns.</title>
        <authorList>
            <person name="Hintsch G."/>
            <person name="Zurlinden A."/>
            <person name="Meskenaite V."/>
            <person name="Steuble M."/>
            <person name="Fink-Widmer K."/>
            <person name="Kinter J."/>
            <person name="Sonderegger P."/>
        </authorList>
    </citation>
    <scope>NUCLEOTIDE SEQUENCE [MRNA]</scope>
    <scope>TISSUE SPECIFICITY</scope>
    <scope>VARIANT ILE-366</scope>
    <source>
        <tissue>Fetal brain</tissue>
    </source>
</reference>
<reference key="2">
    <citation type="journal article" date="2003" name="J. Biol. Chem.">
        <title>Novel cadherin-related membrane proteins, Alcadeins, enhance the X11-like protein-mediated stabilization of amyloid beta-protein precursor metabolism.</title>
        <authorList>
            <person name="Araki Y."/>
            <person name="Tomita S."/>
            <person name="Yamaguchi H."/>
            <person name="Miyagi N."/>
            <person name="Sumioka A."/>
            <person name="Kirino Y."/>
            <person name="Suzuki T."/>
        </authorList>
    </citation>
    <scope>NUCLEOTIDE SEQUENCE [MRNA]</scope>
    <scope>VARIANT ILE-366</scope>
</reference>
<reference key="3">
    <citation type="journal article" date="2004" name="Nat. Genet.">
        <title>Complete sequencing and characterization of 21,243 full-length human cDNAs.</title>
        <authorList>
            <person name="Ota T."/>
            <person name="Suzuki Y."/>
            <person name="Nishikawa T."/>
            <person name="Otsuki T."/>
            <person name="Sugiyama T."/>
            <person name="Irie R."/>
            <person name="Wakamatsu A."/>
            <person name="Hayashi K."/>
            <person name="Sato H."/>
            <person name="Nagai K."/>
            <person name="Kimura K."/>
            <person name="Makita H."/>
            <person name="Sekine M."/>
            <person name="Obayashi M."/>
            <person name="Nishi T."/>
            <person name="Shibahara T."/>
            <person name="Tanaka T."/>
            <person name="Ishii S."/>
            <person name="Yamamoto J."/>
            <person name="Saito K."/>
            <person name="Kawai Y."/>
            <person name="Isono Y."/>
            <person name="Nakamura Y."/>
            <person name="Nagahari K."/>
            <person name="Murakami K."/>
            <person name="Yasuda T."/>
            <person name="Iwayanagi T."/>
            <person name="Wagatsuma M."/>
            <person name="Shiratori A."/>
            <person name="Sudo H."/>
            <person name="Hosoiri T."/>
            <person name="Kaku Y."/>
            <person name="Kodaira H."/>
            <person name="Kondo H."/>
            <person name="Sugawara M."/>
            <person name="Takahashi M."/>
            <person name="Kanda K."/>
            <person name="Yokoi T."/>
            <person name="Furuya T."/>
            <person name="Kikkawa E."/>
            <person name="Omura Y."/>
            <person name="Abe K."/>
            <person name="Kamihara K."/>
            <person name="Katsuta N."/>
            <person name="Sato K."/>
            <person name="Tanikawa M."/>
            <person name="Yamazaki M."/>
            <person name="Ninomiya K."/>
            <person name="Ishibashi T."/>
            <person name="Yamashita H."/>
            <person name="Murakawa K."/>
            <person name="Fujimori K."/>
            <person name="Tanai H."/>
            <person name="Kimata M."/>
            <person name="Watanabe M."/>
            <person name="Hiraoka S."/>
            <person name="Chiba Y."/>
            <person name="Ishida S."/>
            <person name="Ono Y."/>
            <person name="Takiguchi S."/>
            <person name="Watanabe S."/>
            <person name="Yosida M."/>
            <person name="Hotuta T."/>
            <person name="Kusano J."/>
            <person name="Kanehori K."/>
            <person name="Takahashi-Fujii A."/>
            <person name="Hara H."/>
            <person name="Tanase T.-O."/>
            <person name="Nomura Y."/>
            <person name="Togiya S."/>
            <person name="Komai F."/>
            <person name="Hara R."/>
            <person name="Takeuchi K."/>
            <person name="Arita M."/>
            <person name="Imose N."/>
            <person name="Musashino K."/>
            <person name="Yuuki H."/>
            <person name="Oshima A."/>
            <person name="Sasaki N."/>
            <person name="Aotsuka S."/>
            <person name="Yoshikawa Y."/>
            <person name="Matsunawa H."/>
            <person name="Ichihara T."/>
            <person name="Shiohata N."/>
            <person name="Sano S."/>
            <person name="Moriya S."/>
            <person name="Momiyama H."/>
            <person name="Satoh N."/>
            <person name="Takami S."/>
            <person name="Terashima Y."/>
            <person name="Suzuki O."/>
            <person name="Nakagawa S."/>
            <person name="Senoh A."/>
            <person name="Mizoguchi H."/>
            <person name="Goto Y."/>
            <person name="Shimizu F."/>
            <person name="Wakebe H."/>
            <person name="Hishigaki H."/>
            <person name="Watanabe T."/>
            <person name="Sugiyama A."/>
            <person name="Takemoto M."/>
            <person name="Kawakami B."/>
            <person name="Yamazaki M."/>
            <person name="Watanabe K."/>
            <person name="Kumagai A."/>
            <person name="Itakura S."/>
            <person name="Fukuzumi Y."/>
            <person name="Fujimori Y."/>
            <person name="Komiyama M."/>
            <person name="Tashiro H."/>
            <person name="Tanigami A."/>
            <person name="Fujiwara T."/>
            <person name="Ono T."/>
            <person name="Yamada K."/>
            <person name="Fujii Y."/>
            <person name="Ozaki K."/>
            <person name="Hirao M."/>
            <person name="Ohmori Y."/>
            <person name="Kawabata A."/>
            <person name="Hikiji T."/>
            <person name="Kobatake N."/>
            <person name="Inagaki H."/>
            <person name="Ikema Y."/>
            <person name="Okamoto S."/>
            <person name="Okitani R."/>
            <person name="Kawakami T."/>
            <person name="Noguchi S."/>
            <person name="Itoh T."/>
            <person name="Shigeta K."/>
            <person name="Senba T."/>
            <person name="Matsumura K."/>
            <person name="Nakajima Y."/>
            <person name="Mizuno T."/>
            <person name="Morinaga M."/>
            <person name="Sasaki M."/>
            <person name="Togashi T."/>
            <person name="Oyama M."/>
            <person name="Hata H."/>
            <person name="Watanabe M."/>
            <person name="Komatsu T."/>
            <person name="Mizushima-Sugano J."/>
            <person name="Satoh T."/>
            <person name="Shirai Y."/>
            <person name="Takahashi Y."/>
            <person name="Nakagawa K."/>
            <person name="Okumura K."/>
            <person name="Nagase T."/>
            <person name="Nomura N."/>
            <person name="Kikuchi H."/>
            <person name="Masuho Y."/>
            <person name="Yamashita R."/>
            <person name="Nakai K."/>
            <person name="Yada T."/>
            <person name="Nakamura Y."/>
            <person name="Ohara O."/>
            <person name="Isogai T."/>
            <person name="Sugano S."/>
        </authorList>
    </citation>
    <scope>NUCLEOTIDE SEQUENCE [LARGE SCALE MRNA]</scope>
    <source>
        <tissue>Uterus</tissue>
    </source>
</reference>
<reference key="4">
    <citation type="journal article" date="2006" name="Nature">
        <title>The DNA sequence, annotation and analysis of human chromosome 3.</title>
        <authorList>
            <person name="Muzny D.M."/>
            <person name="Scherer S.E."/>
            <person name="Kaul R."/>
            <person name="Wang J."/>
            <person name="Yu J."/>
            <person name="Sudbrak R."/>
            <person name="Buhay C.J."/>
            <person name="Chen R."/>
            <person name="Cree A."/>
            <person name="Ding Y."/>
            <person name="Dugan-Rocha S."/>
            <person name="Gill R."/>
            <person name="Gunaratne P."/>
            <person name="Harris R.A."/>
            <person name="Hawes A.C."/>
            <person name="Hernandez J."/>
            <person name="Hodgson A.V."/>
            <person name="Hume J."/>
            <person name="Jackson A."/>
            <person name="Khan Z.M."/>
            <person name="Kovar-Smith C."/>
            <person name="Lewis L.R."/>
            <person name="Lozado R.J."/>
            <person name="Metzker M.L."/>
            <person name="Milosavljevic A."/>
            <person name="Miner G.R."/>
            <person name="Morgan M.B."/>
            <person name="Nazareth L.V."/>
            <person name="Scott G."/>
            <person name="Sodergren E."/>
            <person name="Song X.-Z."/>
            <person name="Steffen D."/>
            <person name="Wei S."/>
            <person name="Wheeler D.A."/>
            <person name="Wright M.W."/>
            <person name="Worley K.C."/>
            <person name="Yuan Y."/>
            <person name="Zhang Z."/>
            <person name="Adams C.Q."/>
            <person name="Ansari-Lari M.A."/>
            <person name="Ayele M."/>
            <person name="Brown M.J."/>
            <person name="Chen G."/>
            <person name="Chen Z."/>
            <person name="Clendenning J."/>
            <person name="Clerc-Blankenburg K.P."/>
            <person name="Chen R."/>
            <person name="Chen Z."/>
            <person name="Davis C."/>
            <person name="Delgado O."/>
            <person name="Dinh H.H."/>
            <person name="Dong W."/>
            <person name="Draper H."/>
            <person name="Ernst S."/>
            <person name="Fu G."/>
            <person name="Gonzalez-Garay M.L."/>
            <person name="Garcia D.K."/>
            <person name="Gillett W."/>
            <person name="Gu J."/>
            <person name="Hao B."/>
            <person name="Haugen E."/>
            <person name="Havlak P."/>
            <person name="He X."/>
            <person name="Hennig S."/>
            <person name="Hu S."/>
            <person name="Huang W."/>
            <person name="Jackson L.R."/>
            <person name="Jacob L.S."/>
            <person name="Kelly S.H."/>
            <person name="Kube M."/>
            <person name="Levy R."/>
            <person name="Li Z."/>
            <person name="Liu B."/>
            <person name="Liu J."/>
            <person name="Liu W."/>
            <person name="Lu J."/>
            <person name="Maheshwari M."/>
            <person name="Nguyen B.-V."/>
            <person name="Okwuonu G.O."/>
            <person name="Palmeiri A."/>
            <person name="Pasternak S."/>
            <person name="Perez L.M."/>
            <person name="Phelps K.A."/>
            <person name="Plopper F.J."/>
            <person name="Qiang B."/>
            <person name="Raymond C."/>
            <person name="Rodriguez R."/>
            <person name="Saenphimmachak C."/>
            <person name="Santibanez J."/>
            <person name="Shen H."/>
            <person name="Shen Y."/>
            <person name="Subramanian S."/>
            <person name="Tabor P.E."/>
            <person name="Verduzco D."/>
            <person name="Waldron L."/>
            <person name="Wang J."/>
            <person name="Wang J."/>
            <person name="Wang Q."/>
            <person name="Williams G.A."/>
            <person name="Wong G.K.-S."/>
            <person name="Yao Z."/>
            <person name="Zhang J."/>
            <person name="Zhang X."/>
            <person name="Zhao G."/>
            <person name="Zhou J."/>
            <person name="Zhou Y."/>
            <person name="Nelson D."/>
            <person name="Lehrach H."/>
            <person name="Reinhardt R."/>
            <person name="Naylor S.L."/>
            <person name="Yang H."/>
            <person name="Olson M."/>
            <person name="Weinstock G."/>
            <person name="Gibbs R.A."/>
        </authorList>
    </citation>
    <scope>NUCLEOTIDE SEQUENCE [LARGE SCALE GENOMIC DNA]</scope>
</reference>
<reference key="5">
    <citation type="submission" date="2005-09" db="EMBL/GenBank/DDBJ databases">
        <authorList>
            <person name="Mural R.J."/>
            <person name="Istrail S."/>
            <person name="Sutton G.G."/>
            <person name="Florea L."/>
            <person name="Halpern A.L."/>
            <person name="Mobarry C.M."/>
            <person name="Lippert R."/>
            <person name="Walenz B."/>
            <person name="Shatkay H."/>
            <person name="Dew I."/>
            <person name="Miller J.R."/>
            <person name="Flanigan M.J."/>
            <person name="Edwards N.J."/>
            <person name="Bolanos R."/>
            <person name="Fasulo D."/>
            <person name="Halldorsson B.V."/>
            <person name="Hannenhalli S."/>
            <person name="Turner R."/>
            <person name="Yooseph S."/>
            <person name="Lu F."/>
            <person name="Nusskern D.R."/>
            <person name="Shue B.C."/>
            <person name="Zheng X.H."/>
            <person name="Zhong F."/>
            <person name="Delcher A.L."/>
            <person name="Huson D.H."/>
            <person name="Kravitz S.A."/>
            <person name="Mouchard L."/>
            <person name="Reinert K."/>
            <person name="Remington K.A."/>
            <person name="Clark A.G."/>
            <person name="Waterman M.S."/>
            <person name="Eichler E.E."/>
            <person name="Adams M.D."/>
            <person name="Hunkapiller M.W."/>
            <person name="Myers E.W."/>
            <person name="Venter J.C."/>
        </authorList>
    </citation>
    <scope>NUCLEOTIDE SEQUENCE [LARGE SCALE GENOMIC DNA]</scope>
    <scope>VARIANT ILE-366</scope>
</reference>
<reference key="6">
    <citation type="journal article" date="2004" name="Genome Res.">
        <title>The status, quality, and expansion of the NIH full-length cDNA project: the Mammalian Gene Collection (MGC).</title>
        <authorList>
            <consortium name="The MGC Project Team"/>
        </authorList>
    </citation>
    <scope>NUCLEOTIDE SEQUENCE [LARGE SCALE MRNA]</scope>
    <source>
        <tissue>Brain</tissue>
        <tissue>Lung</tissue>
    </source>
</reference>
<reference key="7">
    <citation type="journal article" date="2004" name="J. Biol. Chem.">
        <title>Coordinated metabolism of Alcadein and amyloid beta-protein precursor regulates FE65-dependent gene transactivation.</title>
        <authorList>
            <person name="Araki Y."/>
            <person name="Miyagi N."/>
            <person name="Kato N."/>
            <person name="Yoshida T."/>
            <person name="Wada S."/>
            <person name="Nishimura M."/>
            <person name="Komano H."/>
            <person name="Yamamoto T."/>
            <person name="De Strooper B."/>
            <person name="Yamamoto K."/>
            <person name="Suzuki T."/>
        </authorList>
    </citation>
    <scope>PROTEOLYTIC CLEAVAGE</scope>
</reference>
<reference key="8">
    <citation type="journal article" date="2006" name="Science">
        <title>The consensus coding sequences of human breast and colorectal cancers.</title>
        <authorList>
            <person name="Sjoeblom T."/>
            <person name="Jones S."/>
            <person name="Wood L.D."/>
            <person name="Parsons D.W."/>
            <person name="Lin J."/>
            <person name="Barber T.D."/>
            <person name="Mandelker D."/>
            <person name="Leary R.J."/>
            <person name="Ptak J."/>
            <person name="Silliman N."/>
            <person name="Szabo S."/>
            <person name="Buckhaults P."/>
            <person name="Farrell C."/>
            <person name="Meeh P."/>
            <person name="Markowitz S.D."/>
            <person name="Willis J."/>
            <person name="Dawson D."/>
            <person name="Willson J.K.V."/>
            <person name="Gazdar A.F."/>
            <person name="Hartigan J."/>
            <person name="Wu L."/>
            <person name="Liu C."/>
            <person name="Parmigiani G."/>
            <person name="Park B.H."/>
            <person name="Bachman K.E."/>
            <person name="Papadopoulos N."/>
            <person name="Vogelstein B."/>
            <person name="Kinzler K.W."/>
            <person name="Velculescu V.E."/>
        </authorList>
    </citation>
    <scope>VARIANTS [LARGE SCALE ANALYSIS] ILE-193 AND GLN-765</scope>
</reference>
<comment type="function">
    <text evidence="1 3">Postsynaptic adhesion molecule that binds to presynaptic neurexins to mediate synapse formation, and which is involved in learning and memory (By similarity). Promotes synapse development by acting as a cell adhesion molecule at the postsynaptic membrane, which associates with neurexin-alpha at the presynaptic membrane (By similarity).</text>
</comment>
<comment type="subcellular location">
    <subcellularLocation>
        <location evidence="3">Postsynaptic cell membrane</location>
        <topology evidence="4">Single-pass type I membrane protein</topology>
    </subcellularLocation>
    <subcellularLocation>
        <location evidence="3">Endoplasmic reticulum membrane</location>
        <topology evidence="4">Single-pass type I membrane protein</topology>
    </subcellularLocation>
    <subcellularLocation>
        <location evidence="3">Golgi apparatus membrane</location>
        <topology evidence="4">Single-pass type I membrane protein</topology>
    </subcellularLocation>
    <subcellularLocation>
        <location evidence="3">Cell projection</location>
        <location evidence="3">Dendrite</location>
    </subcellularLocation>
    <text evidence="3">Most prominent in the postsynaptic specializations of asymmetric (type I) synapses with both axodendritic and axospinous localization.</text>
</comment>
<comment type="tissue specificity">
    <text evidence="7">Restricted to the brain.</text>
</comment>
<comment type="domain">
    <text evidence="2">Binds synaptic Ca(2+) with its cytoplasmic domain.</text>
</comment>
<comment type="PTM">
    <text evidence="9">Proteolytically processed under normal cellular conditions (PubMed:15037614). A primary zeta-cleavage generates a large extracellular (soluble) N-terminal domain (sAlc) and a short C-terminal transmembrane fragment (CTF1) (PubMed:15037614). A secondary cleavage catalyzed by gamma-secretase within the transmembrane domain releases the beta-Alc-gamma chain in the extracellular milieu and produces an intracellular fragment (AlcICD) (PubMed:15037614). This processing is strongly suppressed in the tripartite complex formed with APBA2 and APP, which seems to prevent the association with PSEN1 (PubMed:15037614).</text>
</comment>
<comment type="similarity">
    <text evidence="14">Belongs to the calsyntenin family.</text>
</comment>
<evidence type="ECO:0000250" key="1">
    <source>
        <dbReference type="UniProtKB" id="Q99JH7"/>
    </source>
</evidence>
<evidence type="ECO:0000250" key="2">
    <source>
        <dbReference type="UniProtKB" id="Q9EPL2"/>
    </source>
</evidence>
<evidence type="ECO:0000250" key="3">
    <source>
        <dbReference type="UniProtKB" id="Q9ER65"/>
    </source>
</evidence>
<evidence type="ECO:0000255" key="4"/>
<evidence type="ECO:0000255" key="5">
    <source>
        <dbReference type="PROSITE-ProRule" id="PRU00043"/>
    </source>
</evidence>
<evidence type="ECO:0000256" key="6">
    <source>
        <dbReference type="SAM" id="MobiDB-lite"/>
    </source>
</evidence>
<evidence type="ECO:0000269" key="7">
    <source>
    </source>
</evidence>
<evidence type="ECO:0000269" key="8">
    <source>
    </source>
</evidence>
<evidence type="ECO:0000269" key="9">
    <source>
    </source>
</evidence>
<evidence type="ECO:0000269" key="10">
    <source>
    </source>
</evidence>
<evidence type="ECO:0000269" key="11">
    <source ref="5"/>
</evidence>
<evidence type="ECO:0000303" key="12">
    <source>
    </source>
</evidence>
<evidence type="ECO:0000303" key="13">
    <source>
    </source>
</evidence>
<evidence type="ECO:0000305" key="14"/>
<evidence type="ECO:0000312" key="15">
    <source>
        <dbReference type="HGNC" id="HGNC:17448"/>
    </source>
</evidence>